<evidence type="ECO:0000250" key="1">
    <source>
        <dbReference type="UniProtKB" id="Q88QT3"/>
    </source>
</evidence>
<evidence type="ECO:0000269" key="2">
    <source>
    </source>
</evidence>
<evidence type="ECO:0000305" key="3"/>
<evidence type="ECO:0000305" key="4">
    <source>
    </source>
</evidence>
<evidence type="ECO:0000312" key="5">
    <source>
        <dbReference type="EMBL" id="AAF40733.1"/>
    </source>
</evidence>
<reference key="1">
    <citation type="journal article" date="2000" name="Science">
        <title>Complete genome sequence of Neisseria meningitidis serogroup B strain MC58.</title>
        <authorList>
            <person name="Tettelin H."/>
            <person name="Saunders N.J."/>
            <person name="Heidelberg J.F."/>
            <person name="Jeffries A.C."/>
            <person name="Nelson K.E."/>
            <person name="Eisen J.A."/>
            <person name="Ketchum K.A."/>
            <person name="Hood D.W."/>
            <person name="Peden J.F."/>
            <person name="Dodson R.J."/>
            <person name="Nelson W.C."/>
            <person name="Gwinn M.L."/>
            <person name="DeBoy R.T."/>
            <person name="Peterson J.D."/>
            <person name="Hickey E.K."/>
            <person name="Haft D.H."/>
            <person name="Salzberg S.L."/>
            <person name="White O."/>
            <person name="Fleischmann R.D."/>
            <person name="Dougherty B.A."/>
            <person name="Mason T.M."/>
            <person name="Ciecko A."/>
            <person name="Parksey D.S."/>
            <person name="Blair E."/>
            <person name="Cittone H."/>
            <person name="Clark E.B."/>
            <person name="Cotton M.D."/>
            <person name="Utterback T.R."/>
            <person name="Khouri H.M."/>
            <person name="Qin H."/>
            <person name="Vamathevan J.J."/>
            <person name="Gill J."/>
            <person name="Scarlato V."/>
            <person name="Masignani V."/>
            <person name="Pizza M."/>
            <person name="Grandi G."/>
            <person name="Sun L."/>
            <person name="Smith H.O."/>
            <person name="Fraser C.M."/>
            <person name="Moxon E.R."/>
            <person name="Rappuoli R."/>
            <person name="Venter J.C."/>
        </authorList>
    </citation>
    <scope>NUCLEOTIDE SEQUENCE [LARGE SCALE GENOMIC DNA]</scope>
    <source>
        <strain>ATCC BAA-335 / MC58</strain>
    </source>
</reference>
<reference key="2">
    <citation type="journal article" date="2013" name="Nat. Chem. Biol.">
        <title>A cell wall recycling shortcut that bypasses peptidoglycan de novo biosynthesis.</title>
        <authorList>
            <person name="Gisin J."/>
            <person name="Schneider A."/>
            <person name="Naegele B."/>
            <person name="Borisova M."/>
            <person name="Mayer C."/>
        </authorList>
    </citation>
    <scope>FUNCTION</scope>
    <scope>PATHWAY</scope>
    <source>
        <strain>ATCC BAA-335 / MC58</strain>
    </source>
</reference>
<feature type="chain" id="PRO_0000441267" description="N-acetylmuramate/N-acetylglucosamine kinase">
    <location>
        <begin position="1"/>
        <end position="334"/>
    </location>
</feature>
<organism>
    <name type="scientific">Neisseria meningitidis serogroup B (strain ATCC BAA-335 / MC58)</name>
    <dbReference type="NCBI Taxonomy" id="122586"/>
    <lineage>
        <taxon>Bacteria</taxon>
        <taxon>Pseudomonadati</taxon>
        <taxon>Pseudomonadota</taxon>
        <taxon>Betaproteobacteria</taxon>
        <taxon>Neisseriales</taxon>
        <taxon>Neisseriaceae</taxon>
        <taxon>Neisseria</taxon>
    </lineage>
</organism>
<keyword id="KW-0067">ATP-binding</keyword>
<keyword id="KW-0119">Carbohydrate metabolism</keyword>
<keyword id="KW-0133">Cell shape</keyword>
<keyword id="KW-0961">Cell wall biogenesis/degradation</keyword>
<keyword id="KW-0418">Kinase</keyword>
<keyword id="KW-0547">Nucleotide-binding</keyword>
<keyword id="KW-0573">Peptidoglycan synthesis</keyword>
<keyword id="KW-1185">Reference proteome</keyword>
<keyword id="KW-0808">Transferase</keyword>
<comment type="function">
    <text evidence="1 2">Sugar kinase that catalyzes the ATP-dependent phosphorylation of N-acetylmuramate (MurNAc) and N-acetylglucosamine (GlcNAc) at its C1 hydroxyl group, leading to MurNAc alpha-1P and GlcNAc alpha-1P, respectively (By similarity). Is likely involved in peptidoglycan recycling as part of a cell wall recycling pathway that bypasses de novo biosynthesis of the peptidoglycan precursor UDP-MurNAc (PubMed:23831760). Is able to complement the fosfomycin sensitivity phenotype of a P.putida mutant lacking amgK (PubMed:23831760).</text>
</comment>
<comment type="catalytic activity">
    <reaction evidence="1">
        <text>N-acetyl-D-muramate + ATP = N-acetyl-alpha-D-muramate 1-phosphate + ADP + H(+)</text>
        <dbReference type="Rhea" id="RHEA:53720"/>
        <dbReference type="ChEBI" id="CHEBI:15378"/>
        <dbReference type="ChEBI" id="CHEBI:28881"/>
        <dbReference type="ChEBI" id="CHEBI:30616"/>
        <dbReference type="ChEBI" id="CHEBI:137594"/>
        <dbReference type="ChEBI" id="CHEBI:456216"/>
        <dbReference type="EC" id="2.7.1.221"/>
    </reaction>
</comment>
<comment type="catalytic activity">
    <reaction evidence="1">
        <text>N-acetyl-D-glucosamine + ATP = N-acetyl-alpha-D-glucosamine 1-phosphate + ADP + H(+)</text>
        <dbReference type="Rhea" id="RHEA:53724"/>
        <dbReference type="ChEBI" id="CHEBI:15378"/>
        <dbReference type="ChEBI" id="CHEBI:30616"/>
        <dbReference type="ChEBI" id="CHEBI:57776"/>
        <dbReference type="ChEBI" id="CHEBI:456216"/>
        <dbReference type="ChEBI" id="CHEBI:506227"/>
    </reaction>
</comment>
<comment type="pathway">
    <text evidence="4">Cell wall biogenesis; peptidoglycan recycling.</text>
</comment>
<comment type="similarity">
    <text evidence="3">Belongs to the kinase AmgK family.</text>
</comment>
<accession>Q9K188</accession>
<dbReference type="EC" id="2.7.1.221" evidence="1"/>
<dbReference type="EMBL" id="AE002098">
    <property type="protein sequence ID" value="AAF40733.1"/>
    <property type="molecule type" value="Genomic_DNA"/>
</dbReference>
<dbReference type="PIR" id="D81217">
    <property type="entry name" value="D81217"/>
</dbReference>
<dbReference type="RefSeq" id="NP_273335.1">
    <property type="nucleotide sequence ID" value="NC_003112.2"/>
</dbReference>
<dbReference type="RefSeq" id="WP_002224845.1">
    <property type="nucleotide sequence ID" value="NC_003112.2"/>
</dbReference>
<dbReference type="SMR" id="Q9K188"/>
<dbReference type="STRING" id="122586.NMB0279"/>
<dbReference type="PaxDb" id="122586-NMB0279"/>
<dbReference type="KEGG" id="nme:NMB0279"/>
<dbReference type="PATRIC" id="fig|122586.8.peg.348"/>
<dbReference type="HOGENOM" id="CLU_021467_1_0_4"/>
<dbReference type="InParanoid" id="Q9K188"/>
<dbReference type="OrthoDB" id="9809275at2"/>
<dbReference type="UniPathway" id="UPA00544"/>
<dbReference type="Proteomes" id="UP000000425">
    <property type="component" value="Chromosome"/>
</dbReference>
<dbReference type="GO" id="GO:0005524">
    <property type="term" value="F:ATP binding"/>
    <property type="evidence" value="ECO:0007669"/>
    <property type="project" value="UniProtKB-KW"/>
</dbReference>
<dbReference type="GO" id="GO:0016301">
    <property type="term" value="F:kinase activity"/>
    <property type="evidence" value="ECO:0007669"/>
    <property type="project" value="UniProtKB-KW"/>
</dbReference>
<dbReference type="GO" id="GO:0071555">
    <property type="term" value="P:cell wall organization"/>
    <property type="evidence" value="ECO:0007669"/>
    <property type="project" value="UniProtKB-KW"/>
</dbReference>
<dbReference type="GO" id="GO:0009252">
    <property type="term" value="P:peptidoglycan biosynthetic process"/>
    <property type="evidence" value="ECO:0007669"/>
    <property type="project" value="UniProtKB-KW"/>
</dbReference>
<dbReference type="GO" id="GO:0009254">
    <property type="term" value="P:peptidoglycan turnover"/>
    <property type="evidence" value="ECO:0007669"/>
    <property type="project" value="UniProtKB-UniPathway"/>
</dbReference>
<dbReference type="GO" id="GO:0008360">
    <property type="term" value="P:regulation of cell shape"/>
    <property type="evidence" value="ECO:0007669"/>
    <property type="project" value="UniProtKB-KW"/>
</dbReference>
<dbReference type="Gene3D" id="3.90.1200.10">
    <property type="match status" value="1"/>
</dbReference>
<dbReference type="Gene3D" id="3.30.200.20">
    <property type="entry name" value="Phosphorylase Kinase, domain 1"/>
    <property type="match status" value="1"/>
</dbReference>
<dbReference type="InterPro" id="IPR054791">
    <property type="entry name" value="AmgK"/>
</dbReference>
<dbReference type="InterPro" id="IPR002575">
    <property type="entry name" value="Aminoglycoside_PTrfase"/>
</dbReference>
<dbReference type="InterPro" id="IPR011009">
    <property type="entry name" value="Kinase-like_dom_sf"/>
</dbReference>
<dbReference type="NCBIfam" id="NF045759">
    <property type="entry name" value="NamurgluKinAmgK"/>
    <property type="match status" value="1"/>
</dbReference>
<dbReference type="PANTHER" id="PTHR33540:SF1">
    <property type="entry name" value="N-ACETYLMURAMATE_N-ACETYLGLUCOSAMINE KINASE"/>
    <property type="match status" value="1"/>
</dbReference>
<dbReference type="PANTHER" id="PTHR33540">
    <property type="entry name" value="TRNA THREONYLCARBAMOYLADENOSINE BIOSYNTHESIS PROTEIN TSAE"/>
    <property type="match status" value="1"/>
</dbReference>
<dbReference type="Pfam" id="PF01636">
    <property type="entry name" value="APH"/>
    <property type="match status" value="1"/>
</dbReference>
<dbReference type="SUPFAM" id="SSF56112">
    <property type="entry name" value="Protein kinase-like (PK-like)"/>
    <property type="match status" value="1"/>
</dbReference>
<sequence>MQRQIKLKNWLQTVYPERDFDLTFAAADADFRRYFRATFSDGSSVVCMDAPPDKMSVAPYLKVQKLFDMVNVPQVLHADTDLGFVVLNDLGNTTFLTAMLQEQGETAHKALLLEAIGELVELQKASREGVLPEYDRETMLREINLFPEWFVAKELGRELTFKQRQLWQQTVDTLLPPLLAQPKVYVHRDFIVRNLMLTRGRPGVLDFQDALYGPISYDLVSLLRDAFIEWEEEFVLDLVIRYWEKARAAGLPVPEAFDEFYRWFEWMGVQRHLKVAGIFARLYYRDGKDKYRPEIPRFLNYLRRVSRRYAELAPLYALLVELVGDEELETGFTF</sequence>
<proteinExistence type="inferred from homology"/>
<gene>
    <name evidence="1" type="primary">amgK</name>
    <name evidence="5" type="ordered locus">NMB0279</name>
</gene>
<name>AMGK_NEIMB</name>
<protein>
    <recommendedName>
        <fullName evidence="1">N-acetylmuramate/N-acetylglucosamine kinase</fullName>
        <shortName evidence="1">MurNAc/GlcNAc kinase</shortName>
        <ecNumber evidence="1">2.7.1.221</ecNumber>
    </recommendedName>
</protein>